<name>THI4_ASPFU</name>
<gene>
    <name evidence="1" type="primary">thiA</name>
    <name type="ORF">AFUA_6G08360</name>
</gene>
<reference key="1">
    <citation type="journal article" date="2005" name="Nature">
        <title>Genomic sequence of the pathogenic and allergenic filamentous fungus Aspergillus fumigatus.</title>
        <authorList>
            <person name="Nierman W.C."/>
            <person name="Pain A."/>
            <person name="Anderson M.J."/>
            <person name="Wortman J.R."/>
            <person name="Kim H.S."/>
            <person name="Arroyo J."/>
            <person name="Berriman M."/>
            <person name="Abe K."/>
            <person name="Archer D.B."/>
            <person name="Bermejo C."/>
            <person name="Bennett J.W."/>
            <person name="Bowyer P."/>
            <person name="Chen D."/>
            <person name="Collins M."/>
            <person name="Coulsen R."/>
            <person name="Davies R."/>
            <person name="Dyer P.S."/>
            <person name="Farman M.L."/>
            <person name="Fedorova N."/>
            <person name="Fedorova N.D."/>
            <person name="Feldblyum T.V."/>
            <person name="Fischer R."/>
            <person name="Fosker N."/>
            <person name="Fraser A."/>
            <person name="Garcia J.L."/>
            <person name="Garcia M.J."/>
            <person name="Goble A."/>
            <person name="Goldman G.H."/>
            <person name="Gomi K."/>
            <person name="Griffith-Jones S."/>
            <person name="Gwilliam R."/>
            <person name="Haas B.J."/>
            <person name="Haas H."/>
            <person name="Harris D.E."/>
            <person name="Horiuchi H."/>
            <person name="Huang J."/>
            <person name="Humphray S."/>
            <person name="Jimenez J."/>
            <person name="Keller N."/>
            <person name="Khouri H."/>
            <person name="Kitamoto K."/>
            <person name="Kobayashi T."/>
            <person name="Konzack S."/>
            <person name="Kulkarni R."/>
            <person name="Kumagai T."/>
            <person name="Lafton A."/>
            <person name="Latge J.-P."/>
            <person name="Li W."/>
            <person name="Lord A."/>
            <person name="Lu C."/>
            <person name="Majoros W.H."/>
            <person name="May G.S."/>
            <person name="Miller B.L."/>
            <person name="Mohamoud Y."/>
            <person name="Molina M."/>
            <person name="Monod M."/>
            <person name="Mouyna I."/>
            <person name="Mulligan S."/>
            <person name="Murphy L.D."/>
            <person name="O'Neil S."/>
            <person name="Paulsen I."/>
            <person name="Penalva M.A."/>
            <person name="Pertea M."/>
            <person name="Price C."/>
            <person name="Pritchard B.L."/>
            <person name="Quail M.A."/>
            <person name="Rabbinowitsch E."/>
            <person name="Rawlins N."/>
            <person name="Rajandream M.A."/>
            <person name="Reichard U."/>
            <person name="Renauld H."/>
            <person name="Robson G.D."/>
            <person name="Rodriguez de Cordoba S."/>
            <person name="Rodriguez-Pena J.M."/>
            <person name="Ronning C.M."/>
            <person name="Rutter S."/>
            <person name="Salzberg S.L."/>
            <person name="Sanchez M."/>
            <person name="Sanchez-Ferrero J.C."/>
            <person name="Saunders D."/>
            <person name="Seeger K."/>
            <person name="Squares R."/>
            <person name="Squares S."/>
            <person name="Takeuchi M."/>
            <person name="Tekaia F."/>
            <person name="Turner G."/>
            <person name="Vazquez de Aldana C.R."/>
            <person name="Weidman J."/>
            <person name="White O."/>
            <person name="Woodward J.R."/>
            <person name="Yu J.-H."/>
            <person name="Fraser C.M."/>
            <person name="Galagan J.E."/>
            <person name="Asai K."/>
            <person name="Machida M."/>
            <person name="Hall N."/>
            <person name="Barrell B.G."/>
            <person name="Denning D.W."/>
        </authorList>
    </citation>
    <scope>NUCLEOTIDE SEQUENCE [LARGE SCALE GENOMIC DNA]</scope>
    <source>
        <strain>ATCC MYA-4609 / CBS 101355 / FGSC A1100 / Af293</strain>
    </source>
</reference>
<dbReference type="EC" id="2.4.2.60" evidence="1"/>
<dbReference type="EMBL" id="AAHF01000006">
    <property type="protein sequence ID" value="EAL88687.1"/>
    <property type="molecule type" value="Genomic_DNA"/>
</dbReference>
<dbReference type="RefSeq" id="XP_750725.1">
    <property type="nucleotide sequence ID" value="XM_745632.1"/>
</dbReference>
<dbReference type="SMR" id="Q4WMX7"/>
<dbReference type="FunCoup" id="Q4WMX7">
    <property type="interactions" value="846"/>
</dbReference>
<dbReference type="STRING" id="330879.Q4WMX7"/>
<dbReference type="EnsemblFungi" id="EAL88687">
    <property type="protein sequence ID" value="EAL88687"/>
    <property type="gene ID" value="AFUA_6G08360"/>
</dbReference>
<dbReference type="GeneID" id="3508853"/>
<dbReference type="KEGG" id="afm:AFUA_6G08360"/>
<dbReference type="VEuPathDB" id="FungiDB:Afu6g08360"/>
<dbReference type="eggNOG" id="KOG2960">
    <property type="taxonomic scope" value="Eukaryota"/>
</dbReference>
<dbReference type="HOGENOM" id="CLU_053727_0_0_1"/>
<dbReference type="InParanoid" id="Q4WMX7"/>
<dbReference type="OMA" id="MFPRIVV"/>
<dbReference type="OrthoDB" id="410463at2759"/>
<dbReference type="Proteomes" id="UP000002530">
    <property type="component" value="Chromosome 6"/>
</dbReference>
<dbReference type="GO" id="GO:0005829">
    <property type="term" value="C:cytosol"/>
    <property type="evidence" value="ECO:0007669"/>
    <property type="project" value="UniProtKB-UniRule"/>
</dbReference>
<dbReference type="GO" id="GO:0005634">
    <property type="term" value="C:nucleus"/>
    <property type="evidence" value="ECO:0007669"/>
    <property type="project" value="UniProtKB-SubCell"/>
</dbReference>
<dbReference type="GO" id="GO:0160205">
    <property type="term" value="F:cysteine-dependent adenosine diphosphate thiazole synthase activity"/>
    <property type="evidence" value="ECO:0007669"/>
    <property type="project" value="UniProtKB-EC"/>
</dbReference>
<dbReference type="GO" id="GO:0008198">
    <property type="term" value="F:ferrous iron binding"/>
    <property type="evidence" value="ECO:0007669"/>
    <property type="project" value="EnsemblFungi"/>
</dbReference>
<dbReference type="GO" id="GO:0005506">
    <property type="term" value="F:iron ion binding"/>
    <property type="evidence" value="ECO:0000318"/>
    <property type="project" value="GO_Central"/>
</dbReference>
<dbReference type="GO" id="GO:0000002">
    <property type="term" value="P:mitochondrial genome maintenance"/>
    <property type="evidence" value="ECO:0007669"/>
    <property type="project" value="EnsemblFungi"/>
</dbReference>
<dbReference type="GO" id="GO:0009228">
    <property type="term" value="P:thiamine biosynthetic process"/>
    <property type="evidence" value="ECO:0007669"/>
    <property type="project" value="UniProtKB-UniRule"/>
</dbReference>
<dbReference type="GO" id="GO:0052837">
    <property type="term" value="P:thiazole biosynthetic process"/>
    <property type="evidence" value="ECO:0000318"/>
    <property type="project" value="GO_Central"/>
</dbReference>
<dbReference type="Gene3D" id="6.10.250.2840">
    <property type="match status" value="1"/>
</dbReference>
<dbReference type="Gene3D" id="3.50.50.60">
    <property type="entry name" value="FAD/NAD(P)-binding domain"/>
    <property type="match status" value="1"/>
</dbReference>
<dbReference type="HAMAP" id="MF_03158">
    <property type="entry name" value="THI4"/>
    <property type="match status" value="1"/>
</dbReference>
<dbReference type="InterPro" id="IPR036188">
    <property type="entry name" value="FAD/NAD-bd_sf"/>
</dbReference>
<dbReference type="InterPro" id="IPR027495">
    <property type="entry name" value="Sti35"/>
</dbReference>
<dbReference type="InterPro" id="IPR002922">
    <property type="entry name" value="Thi4_fam"/>
</dbReference>
<dbReference type="NCBIfam" id="TIGR00292">
    <property type="entry name" value="sulfide-dependent adenosine diphosphate thiazole synthase"/>
    <property type="match status" value="1"/>
</dbReference>
<dbReference type="PANTHER" id="PTHR43422">
    <property type="entry name" value="THIAMINE THIAZOLE SYNTHASE"/>
    <property type="match status" value="1"/>
</dbReference>
<dbReference type="PANTHER" id="PTHR43422:SF3">
    <property type="entry name" value="THIAMINE THIAZOLE SYNTHASE"/>
    <property type="match status" value="1"/>
</dbReference>
<dbReference type="Pfam" id="PF01946">
    <property type="entry name" value="Thi4"/>
    <property type="match status" value="1"/>
</dbReference>
<dbReference type="SUPFAM" id="SSF51905">
    <property type="entry name" value="FAD/NAD(P)-binding domain"/>
    <property type="match status" value="1"/>
</dbReference>
<proteinExistence type="inferred from homology"/>
<comment type="function">
    <text evidence="1">Involved in biosynthesis of the thiamine precursor thiazole. Catalyzes the conversion of NAD and glycine to adenosine diphosphate 5-(2-hydroxyethyl)-4-methylthiazole-2-carboxylic acid (ADT), an adenylated thiazole intermediate. The reaction includes an iron-dependent sulfide transfer from a conserved cysteine residue of the protein to a thiazole intermediate. The enzyme can only undergo a single turnover, which suggests it is a suicide enzyme. May have additional roles in adaptation to various stress conditions and in DNA damage tolerance.</text>
</comment>
<comment type="catalytic activity">
    <reaction evidence="1">
        <text>[ADP-thiazole synthase]-L-cysteine + glycine + NAD(+) = [ADP-thiazole synthase]-dehydroalanine + ADP-5-ethyl-4-methylthiazole-2-carboxylate + nicotinamide + 3 H2O + 2 H(+)</text>
        <dbReference type="Rhea" id="RHEA:55708"/>
        <dbReference type="Rhea" id="RHEA-COMP:14264"/>
        <dbReference type="Rhea" id="RHEA-COMP:14265"/>
        <dbReference type="ChEBI" id="CHEBI:15377"/>
        <dbReference type="ChEBI" id="CHEBI:15378"/>
        <dbReference type="ChEBI" id="CHEBI:17154"/>
        <dbReference type="ChEBI" id="CHEBI:29950"/>
        <dbReference type="ChEBI" id="CHEBI:57305"/>
        <dbReference type="ChEBI" id="CHEBI:57540"/>
        <dbReference type="ChEBI" id="CHEBI:90873"/>
        <dbReference type="ChEBI" id="CHEBI:139151"/>
        <dbReference type="EC" id="2.4.2.60"/>
    </reaction>
</comment>
<comment type="cofactor">
    <cofactor evidence="1">
        <name>Fe cation</name>
        <dbReference type="ChEBI" id="CHEBI:24875"/>
    </cofactor>
    <text evidence="1">Binds 1 Fe cation per subunit.</text>
</comment>
<comment type="subunit">
    <text evidence="1">Homooctamer.</text>
</comment>
<comment type="subcellular location">
    <subcellularLocation>
        <location evidence="1">Cytoplasm</location>
    </subcellularLocation>
    <subcellularLocation>
        <location evidence="1">Nucleus</location>
    </subcellularLocation>
</comment>
<comment type="PTM">
    <text evidence="1">During the catalytic reaction, a sulfide is transferred from Cys-221 to a reaction intermediate, generating a dehydroalanine residue.</text>
</comment>
<comment type="similarity">
    <text evidence="1">Belongs to the THI4 family.</text>
</comment>
<feature type="chain" id="PRO_0000415876" description="Thiamine thiazole synthase">
    <location>
        <begin position="1"/>
        <end position="332"/>
    </location>
</feature>
<feature type="binding site" evidence="1">
    <location>
        <position position="87"/>
    </location>
    <ligand>
        <name>substrate</name>
    </ligand>
</feature>
<feature type="binding site" evidence="1">
    <location>
        <begin position="108"/>
        <end position="109"/>
    </location>
    <ligand>
        <name>substrate</name>
    </ligand>
</feature>
<feature type="binding site" evidence="1">
    <location>
        <position position="116"/>
    </location>
    <ligand>
        <name>substrate</name>
    </ligand>
</feature>
<feature type="binding site" evidence="1">
    <location>
        <position position="184"/>
    </location>
    <ligand>
        <name>substrate</name>
    </ligand>
</feature>
<feature type="binding site" evidence="1">
    <location>
        <position position="223"/>
    </location>
    <ligand>
        <name>substrate</name>
    </ligand>
</feature>
<feature type="binding site" evidence="1">
    <location>
        <position position="238"/>
    </location>
    <ligand>
        <name>substrate</name>
    </ligand>
</feature>
<feature type="binding site" evidence="1">
    <location>
        <position position="290"/>
    </location>
    <ligand>
        <name>substrate</name>
    </ligand>
</feature>
<feature type="binding site" evidence="1">
    <location>
        <begin position="300"/>
        <end position="302"/>
    </location>
    <ligand>
        <name>substrate</name>
    </ligand>
</feature>
<feature type="modified residue" description="2,3-didehydroalanine (Cys)" evidence="1">
    <location>
        <position position="221"/>
    </location>
</feature>
<sequence>MSPPAAIFEPAVAPSPSLKAKVLVPETVPASGTSQTHLLDHFGGKWDDFKFAPIRESQVSRAMTRRYFQDLDKYAESDIVIVGAGSCGLSTAYVLAKARPDLKIAIIEASVSPGGGAWLGGQLFSAMVLRRPAEVFLNEIGVPFEEDPANPNFVVVKHASLFTSTLMSKVLSFPNVKLFNATAVEDLVTRPSASGDAKDTQIAGVVVNWTLVTLHHDDHSCMDPNTINAPVVISTTGHDGPFGAFCAKRLVSMNTVDKLGGMRGLDMNSAEDAIVKNTREVAKGLIIGGMELSEIDGFNRMGPTFGAMVLSGVKAAEEALKVFDQRQRECAE</sequence>
<organism>
    <name type="scientific">Aspergillus fumigatus (strain ATCC MYA-4609 / CBS 101355 / FGSC A1100 / Af293)</name>
    <name type="common">Neosartorya fumigata</name>
    <dbReference type="NCBI Taxonomy" id="330879"/>
    <lineage>
        <taxon>Eukaryota</taxon>
        <taxon>Fungi</taxon>
        <taxon>Dikarya</taxon>
        <taxon>Ascomycota</taxon>
        <taxon>Pezizomycotina</taxon>
        <taxon>Eurotiomycetes</taxon>
        <taxon>Eurotiomycetidae</taxon>
        <taxon>Eurotiales</taxon>
        <taxon>Aspergillaceae</taxon>
        <taxon>Aspergillus</taxon>
        <taxon>Aspergillus subgen. Fumigati</taxon>
    </lineage>
</organism>
<protein>
    <recommendedName>
        <fullName evidence="1">Thiamine thiazole synthase</fullName>
        <ecNumber evidence="1">2.4.2.60</ecNumber>
    </recommendedName>
    <alternativeName>
        <fullName evidence="1">Thiazole biosynthetic enzyme</fullName>
    </alternativeName>
</protein>
<keyword id="KW-0963">Cytoplasm</keyword>
<keyword id="KW-0408">Iron</keyword>
<keyword id="KW-0479">Metal-binding</keyword>
<keyword id="KW-0520">NAD</keyword>
<keyword id="KW-0539">Nucleus</keyword>
<keyword id="KW-1185">Reference proteome</keyword>
<keyword id="KW-0784">Thiamine biosynthesis</keyword>
<keyword id="KW-0808">Transferase</keyword>
<accession>Q4WMX7</accession>
<evidence type="ECO:0000255" key="1">
    <source>
        <dbReference type="HAMAP-Rule" id="MF_03158"/>
    </source>
</evidence>